<accession>A7NIQ9</accession>
<gene>
    <name evidence="1" type="primary">atpD</name>
    <name type="ordered locus">Rcas_1265</name>
</gene>
<feature type="chain" id="PRO_0000339584" description="ATP synthase subunit beta">
    <location>
        <begin position="1"/>
        <end position="471"/>
    </location>
</feature>
<feature type="binding site" evidence="1">
    <location>
        <begin position="153"/>
        <end position="160"/>
    </location>
    <ligand>
        <name>ATP</name>
        <dbReference type="ChEBI" id="CHEBI:30616"/>
    </ligand>
</feature>
<comment type="function">
    <text evidence="1">Produces ATP from ADP in the presence of a proton gradient across the membrane. The catalytic sites are hosted primarily by the beta subunits.</text>
</comment>
<comment type="catalytic activity">
    <reaction evidence="1">
        <text>ATP + H2O + 4 H(+)(in) = ADP + phosphate + 5 H(+)(out)</text>
        <dbReference type="Rhea" id="RHEA:57720"/>
        <dbReference type="ChEBI" id="CHEBI:15377"/>
        <dbReference type="ChEBI" id="CHEBI:15378"/>
        <dbReference type="ChEBI" id="CHEBI:30616"/>
        <dbReference type="ChEBI" id="CHEBI:43474"/>
        <dbReference type="ChEBI" id="CHEBI:456216"/>
        <dbReference type="EC" id="7.1.2.2"/>
    </reaction>
</comment>
<comment type="subunit">
    <text evidence="1">F-type ATPases have 2 components, CF(1) - the catalytic core - and CF(0) - the membrane proton channel. CF(1) has five subunits: alpha(3), beta(3), gamma(1), delta(1), epsilon(1). CF(0) has four main subunits: a(1), b(1), b'(1) and c(9-12).</text>
</comment>
<comment type="subcellular location">
    <subcellularLocation>
        <location evidence="1">Cell membrane</location>
        <topology evidence="1">Peripheral membrane protein</topology>
    </subcellularLocation>
</comment>
<comment type="similarity">
    <text evidence="1">Belongs to the ATPase alpha/beta chains family.</text>
</comment>
<protein>
    <recommendedName>
        <fullName evidence="1">ATP synthase subunit beta</fullName>
        <ecNumber evidence="1">7.1.2.2</ecNumber>
    </recommendedName>
    <alternativeName>
        <fullName evidence="1">ATP synthase F1 sector subunit beta</fullName>
    </alternativeName>
    <alternativeName>
        <fullName evidence="1">F-ATPase subunit beta</fullName>
    </alternativeName>
</protein>
<keyword id="KW-0066">ATP synthesis</keyword>
<keyword id="KW-0067">ATP-binding</keyword>
<keyword id="KW-1003">Cell membrane</keyword>
<keyword id="KW-0139">CF(1)</keyword>
<keyword id="KW-0375">Hydrogen ion transport</keyword>
<keyword id="KW-0406">Ion transport</keyword>
<keyword id="KW-0472">Membrane</keyword>
<keyword id="KW-0547">Nucleotide-binding</keyword>
<keyword id="KW-1185">Reference proteome</keyword>
<keyword id="KW-1278">Translocase</keyword>
<keyword id="KW-0813">Transport</keyword>
<evidence type="ECO:0000255" key="1">
    <source>
        <dbReference type="HAMAP-Rule" id="MF_01347"/>
    </source>
</evidence>
<name>ATPB_ROSCS</name>
<reference key="1">
    <citation type="submission" date="2007-08" db="EMBL/GenBank/DDBJ databases">
        <title>Complete sequence of Roseiflexus castenholzii DSM 13941.</title>
        <authorList>
            <consortium name="US DOE Joint Genome Institute"/>
            <person name="Copeland A."/>
            <person name="Lucas S."/>
            <person name="Lapidus A."/>
            <person name="Barry K."/>
            <person name="Glavina del Rio T."/>
            <person name="Dalin E."/>
            <person name="Tice H."/>
            <person name="Pitluck S."/>
            <person name="Thompson L.S."/>
            <person name="Brettin T."/>
            <person name="Bruce D."/>
            <person name="Detter J.C."/>
            <person name="Han C."/>
            <person name="Tapia R."/>
            <person name="Schmutz J."/>
            <person name="Larimer F."/>
            <person name="Land M."/>
            <person name="Hauser L."/>
            <person name="Kyrpides N."/>
            <person name="Mikhailova N."/>
            <person name="Bryant D.A."/>
            <person name="Hanada S."/>
            <person name="Tsukatani Y."/>
            <person name="Richardson P."/>
        </authorList>
    </citation>
    <scope>NUCLEOTIDE SEQUENCE [LARGE SCALE GENOMIC DNA]</scope>
    <source>
        <strain>DSM 13941 / HLO8</strain>
    </source>
</reference>
<sequence>MAGATGIVTDIIGVVINAKFPEHETPEIYNALEIRLENGKRLVAEVQQQLGGGVVKAVAMSSTDGMRRGVKAIDTGRPIAVPVGPGTLGRVFDVLGDPIDGEGPVQTTEYRPIHRPPPALEDQSTTAQIFETGIKVIDLIAPFTRGGKTGIFGGAGVGKTVIIQELIANVAKEQSGYSVFAGVGERSREGNDLIHEMKEARIDEKTRVFDKTVMVFGQMNEPPGARLRVGLTAMTMAEYFRDEGRDVLLFIDNIFRFVQAGSEVSALLGRMPSQVGYQPTLGTEMGELQERITSTKKGSITSMQAVYVPADDYTDPAPATVFSHLDATITLERSIAAKGIYPAVDPLASTSRILDPNIVGEEHYRVAREVQRVLQRYKDLQDIIAILGVEELSDEDKLTVARARKIERFFSQPFTVAQQFTGRPGKYVPIGETVKSFARLLAGEVDHIPEQFFLLQGGLDDVIQAYEASRR</sequence>
<organism>
    <name type="scientific">Roseiflexus castenholzii (strain DSM 13941 / HLO8)</name>
    <dbReference type="NCBI Taxonomy" id="383372"/>
    <lineage>
        <taxon>Bacteria</taxon>
        <taxon>Bacillati</taxon>
        <taxon>Chloroflexota</taxon>
        <taxon>Chloroflexia</taxon>
        <taxon>Chloroflexales</taxon>
        <taxon>Roseiflexineae</taxon>
        <taxon>Roseiflexaceae</taxon>
        <taxon>Roseiflexus</taxon>
    </lineage>
</organism>
<dbReference type="EC" id="7.1.2.2" evidence="1"/>
<dbReference type="EMBL" id="CP000804">
    <property type="protein sequence ID" value="ABU57362.1"/>
    <property type="molecule type" value="Genomic_DNA"/>
</dbReference>
<dbReference type="RefSeq" id="WP_012119792.1">
    <property type="nucleotide sequence ID" value="NC_009767.1"/>
</dbReference>
<dbReference type="SMR" id="A7NIQ9"/>
<dbReference type="STRING" id="383372.Rcas_1265"/>
<dbReference type="KEGG" id="rca:Rcas_1265"/>
<dbReference type="eggNOG" id="COG0055">
    <property type="taxonomic scope" value="Bacteria"/>
</dbReference>
<dbReference type="HOGENOM" id="CLU_022398_0_2_0"/>
<dbReference type="OrthoDB" id="9801639at2"/>
<dbReference type="Proteomes" id="UP000000263">
    <property type="component" value="Chromosome"/>
</dbReference>
<dbReference type="GO" id="GO:0005886">
    <property type="term" value="C:plasma membrane"/>
    <property type="evidence" value="ECO:0007669"/>
    <property type="project" value="UniProtKB-SubCell"/>
</dbReference>
<dbReference type="GO" id="GO:0045259">
    <property type="term" value="C:proton-transporting ATP synthase complex"/>
    <property type="evidence" value="ECO:0007669"/>
    <property type="project" value="UniProtKB-KW"/>
</dbReference>
<dbReference type="GO" id="GO:0005524">
    <property type="term" value="F:ATP binding"/>
    <property type="evidence" value="ECO:0007669"/>
    <property type="project" value="UniProtKB-UniRule"/>
</dbReference>
<dbReference type="GO" id="GO:0016887">
    <property type="term" value="F:ATP hydrolysis activity"/>
    <property type="evidence" value="ECO:0007669"/>
    <property type="project" value="InterPro"/>
</dbReference>
<dbReference type="GO" id="GO:0046933">
    <property type="term" value="F:proton-transporting ATP synthase activity, rotational mechanism"/>
    <property type="evidence" value="ECO:0007669"/>
    <property type="project" value="UniProtKB-UniRule"/>
</dbReference>
<dbReference type="CDD" id="cd18110">
    <property type="entry name" value="ATP-synt_F1_beta_C"/>
    <property type="match status" value="1"/>
</dbReference>
<dbReference type="CDD" id="cd18115">
    <property type="entry name" value="ATP-synt_F1_beta_N"/>
    <property type="match status" value="1"/>
</dbReference>
<dbReference type="CDD" id="cd01133">
    <property type="entry name" value="F1-ATPase_beta_CD"/>
    <property type="match status" value="1"/>
</dbReference>
<dbReference type="FunFam" id="1.10.1140.10:FF:000001">
    <property type="entry name" value="ATP synthase subunit beta"/>
    <property type="match status" value="1"/>
</dbReference>
<dbReference type="FunFam" id="3.40.50.300:FF:000004">
    <property type="entry name" value="ATP synthase subunit beta"/>
    <property type="match status" value="1"/>
</dbReference>
<dbReference type="Gene3D" id="2.40.10.170">
    <property type="match status" value="1"/>
</dbReference>
<dbReference type="Gene3D" id="1.10.1140.10">
    <property type="entry name" value="Bovine Mitochondrial F1-atpase, Atp Synthase Beta Chain, Chain D, domain 3"/>
    <property type="match status" value="1"/>
</dbReference>
<dbReference type="Gene3D" id="3.40.50.300">
    <property type="entry name" value="P-loop containing nucleotide triphosphate hydrolases"/>
    <property type="match status" value="1"/>
</dbReference>
<dbReference type="HAMAP" id="MF_01347">
    <property type="entry name" value="ATP_synth_beta_bact"/>
    <property type="match status" value="1"/>
</dbReference>
<dbReference type="InterPro" id="IPR003593">
    <property type="entry name" value="AAA+_ATPase"/>
</dbReference>
<dbReference type="InterPro" id="IPR055190">
    <property type="entry name" value="ATP-synt_VA_C"/>
</dbReference>
<dbReference type="InterPro" id="IPR005722">
    <property type="entry name" value="ATP_synth_F1_bsu"/>
</dbReference>
<dbReference type="InterPro" id="IPR020003">
    <property type="entry name" value="ATPase_a/bsu_AS"/>
</dbReference>
<dbReference type="InterPro" id="IPR050053">
    <property type="entry name" value="ATPase_alpha/beta_chains"/>
</dbReference>
<dbReference type="InterPro" id="IPR004100">
    <property type="entry name" value="ATPase_F1/V1/A1_a/bsu_N"/>
</dbReference>
<dbReference type="InterPro" id="IPR036121">
    <property type="entry name" value="ATPase_F1/V1/A1_a/bsu_N_sf"/>
</dbReference>
<dbReference type="InterPro" id="IPR000194">
    <property type="entry name" value="ATPase_F1/V1/A1_a/bsu_nucl-bd"/>
</dbReference>
<dbReference type="InterPro" id="IPR024034">
    <property type="entry name" value="ATPase_F1/V1_b/a_C"/>
</dbReference>
<dbReference type="InterPro" id="IPR027417">
    <property type="entry name" value="P-loop_NTPase"/>
</dbReference>
<dbReference type="NCBIfam" id="TIGR01039">
    <property type="entry name" value="atpD"/>
    <property type="match status" value="1"/>
</dbReference>
<dbReference type="PANTHER" id="PTHR15184">
    <property type="entry name" value="ATP SYNTHASE"/>
    <property type="match status" value="1"/>
</dbReference>
<dbReference type="PANTHER" id="PTHR15184:SF71">
    <property type="entry name" value="ATP SYNTHASE SUBUNIT BETA, MITOCHONDRIAL"/>
    <property type="match status" value="1"/>
</dbReference>
<dbReference type="Pfam" id="PF00006">
    <property type="entry name" value="ATP-synt_ab"/>
    <property type="match status" value="1"/>
</dbReference>
<dbReference type="Pfam" id="PF02874">
    <property type="entry name" value="ATP-synt_ab_N"/>
    <property type="match status" value="1"/>
</dbReference>
<dbReference type="Pfam" id="PF22919">
    <property type="entry name" value="ATP-synt_VA_C"/>
    <property type="match status" value="1"/>
</dbReference>
<dbReference type="SMART" id="SM00382">
    <property type="entry name" value="AAA"/>
    <property type="match status" value="1"/>
</dbReference>
<dbReference type="SUPFAM" id="SSF47917">
    <property type="entry name" value="C-terminal domain of alpha and beta subunits of F1 ATP synthase"/>
    <property type="match status" value="1"/>
</dbReference>
<dbReference type="SUPFAM" id="SSF50615">
    <property type="entry name" value="N-terminal domain of alpha and beta subunits of F1 ATP synthase"/>
    <property type="match status" value="1"/>
</dbReference>
<dbReference type="SUPFAM" id="SSF52540">
    <property type="entry name" value="P-loop containing nucleoside triphosphate hydrolases"/>
    <property type="match status" value="1"/>
</dbReference>
<dbReference type="PROSITE" id="PS00152">
    <property type="entry name" value="ATPASE_ALPHA_BETA"/>
    <property type="match status" value="1"/>
</dbReference>
<proteinExistence type="inferred from homology"/>